<sequence length="105" mass="11779">MIASKFGIGQQVRHSLLGYLGVVVDIDPVYSLSEPSPDELAVNDELRAAPWYHVVMEDDNGLPVHTYLAEAQLSSELQDEHPEQPSMDELAQTIRKQLQAPRLRN</sequence>
<evidence type="ECO:0000255" key="1">
    <source>
        <dbReference type="HAMAP-Rule" id="MF_01194"/>
    </source>
</evidence>
<evidence type="ECO:0000256" key="2">
    <source>
        <dbReference type="SAM" id="MobiDB-lite"/>
    </source>
</evidence>
<evidence type="ECO:0000305" key="3"/>
<organism>
    <name type="scientific">Escherichia coli O1:K1 / APEC</name>
    <dbReference type="NCBI Taxonomy" id="405955"/>
    <lineage>
        <taxon>Bacteria</taxon>
        <taxon>Pseudomonadati</taxon>
        <taxon>Pseudomonadota</taxon>
        <taxon>Gammaproteobacteria</taxon>
        <taxon>Enterobacterales</taxon>
        <taxon>Enterobacteriaceae</taxon>
        <taxon>Escherichia</taxon>
    </lineage>
</organism>
<name>HSPQ_ECOK1</name>
<feature type="chain" id="PRO_0000315305" description="Heat shock protein HspQ">
    <location>
        <begin position="1"/>
        <end position="105"/>
    </location>
</feature>
<feature type="region of interest" description="Disordered" evidence="2">
    <location>
        <begin position="75"/>
        <end position="105"/>
    </location>
</feature>
<reference key="1">
    <citation type="journal article" date="2007" name="J. Bacteriol.">
        <title>The genome sequence of avian pathogenic Escherichia coli strain O1:K1:H7 shares strong similarities with human extraintestinal pathogenic E. coli genomes.</title>
        <authorList>
            <person name="Johnson T.J."/>
            <person name="Kariyawasam S."/>
            <person name="Wannemuehler Y."/>
            <person name="Mangiamele P."/>
            <person name="Johnson S.J."/>
            <person name="Doetkott C."/>
            <person name="Skyberg J.A."/>
            <person name="Lynne A.M."/>
            <person name="Johnson J.R."/>
            <person name="Nolan L.K."/>
        </authorList>
    </citation>
    <scope>NUCLEOTIDE SEQUENCE [LARGE SCALE GENOMIC DNA]</scope>
</reference>
<dbReference type="EMBL" id="CP000468">
    <property type="protein sequence ID" value="ABJ00375.1"/>
    <property type="status" value="ALT_INIT"/>
    <property type="molecule type" value="Genomic_DNA"/>
</dbReference>
<dbReference type="RefSeq" id="WP_001295356.1">
    <property type="nucleotide sequence ID" value="NZ_CADILS010000016.1"/>
</dbReference>
<dbReference type="SMR" id="A1A9N5"/>
<dbReference type="GeneID" id="93776448"/>
<dbReference type="KEGG" id="ecv:APECO1_71"/>
<dbReference type="HOGENOM" id="CLU_123865_1_0_6"/>
<dbReference type="Proteomes" id="UP000008216">
    <property type="component" value="Chromosome"/>
</dbReference>
<dbReference type="GO" id="GO:0005737">
    <property type="term" value="C:cytoplasm"/>
    <property type="evidence" value="ECO:0007669"/>
    <property type="project" value="UniProtKB-SubCell"/>
</dbReference>
<dbReference type="GO" id="GO:0003677">
    <property type="term" value="F:DNA binding"/>
    <property type="evidence" value="ECO:0007669"/>
    <property type="project" value="InterPro"/>
</dbReference>
<dbReference type="GO" id="GO:0009408">
    <property type="term" value="P:response to heat"/>
    <property type="evidence" value="ECO:0007669"/>
    <property type="project" value="UniProtKB-UniRule"/>
</dbReference>
<dbReference type="Gene3D" id="2.30.30.390">
    <property type="entry name" value="Hemimethylated DNA-binding domain"/>
    <property type="match status" value="1"/>
</dbReference>
<dbReference type="HAMAP" id="MF_01194">
    <property type="entry name" value="HspQ"/>
    <property type="match status" value="1"/>
</dbReference>
<dbReference type="InterPro" id="IPR011722">
    <property type="entry name" value="Hemimethylated_DNA-bd_dom"/>
</dbReference>
<dbReference type="InterPro" id="IPR036623">
    <property type="entry name" value="Hemimethylated_DNA-bd_sf"/>
</dbReference>
<dbReference type="InterPro" id="IPR022866">
    <property type="entry name" value="HspQ"/>
</dbReference>
<dbReference type="NCBIfam" id="NF010729">
    <property type="entry name" value="PRK14129.1"/>
    <property type="match status" value="1"/>
</dbReference>
<dbReference type="NCBIfam" id="TIGR02097">
    <property type="entry name" value="yccV"/>
    <property type="match status" value="1"/>
</dbReference>
<dbReference type="Pfam" id="PF08755">
    <property type="entry name" value="YccV-like"/>
    <property type="match status" value="1"/>
</dbReference>
<dbReference type="SMART" id="SM00992">
    <property type="entry name" value="YccV-like"/>
    <property type="match status" value="1"/>
</dbReference>
<dbReference type="SUPFAM" id="SSF141255">
    <property type="entry name" value="YccV-like"/>
    <property type="match status" value="1"/>
</dbReference>
<comment type="function">
    <text evidence="1">Involved in the degradation of certain denaturated proteins, including DnaA, during heat shock stress.</text>
</comment>
<comment type="subcellular location">
    <subcellularLocation>
        <location evidence="1">Cytoplasm</location>
    </subcellularLocation>
</comment>
<comment type="similarity">
    <text evidence="1">Belongs to the HspQ family.</text>
</comment>
<comment type="sequence caution" evidence="3">
    <conflict type="erroneous initiation">
        <sequence resource="EMBL-CDS" id="ABJ00375"/>
    </conflict>
</comment>
<accession>A1A9N5</accession>
<protein>
    <recommendedName>
        <fullName evidence="1">Heat shock protein HspQ</fullName>
    </recommendedName>
</protein>
<proteinExistence type="inferred from homology"/>
<gene>
    <name evidence="1" type="primary">hspQ</name>
    <name type="ordered locus">Ecok1_08810</name>
    <name type="ORF">APECO1_71</name>
</gene>
<keyword id="KW-0963">Cytoplasm</keyword>
<keyword id="KW-1185">Reference proteome</keyword>
<keyword id="KW-0346">Stress response</keyword>